<accession>Q97ZW4</accession>
<proteinExistence type="inferred from homology"/>
<name>APBC_SACS2</name>
<gene>
    <name evidence="5" type="ordered locus">SSO0460</name>
</gene>
<sequence>MSSNPFRIQNPQPQPQRQPRDLRKVNQQVQAVDLKVQMKMKNIKYKIGVVSGKGGVGKSFVSSNLAMAIAASGRKVGIVDVDFHGPSVPKMLGVRGQMLTADDKGINPVIGPFGIKVVSIDFLLPRDDTPVVWRGAIKHSAIKQFLGDVNWGELDYLIIDMPPGTGDEALSIAQLVPGITGFVIVTIPSEVSTLAVKKSINFARTVNTKILGVVENMSHFVCPSDGKVYYIFGEGKGKKMAEEMGVDLLGQVPLDPSIAEANDAGEPFFLKHPDSPTSKEFLNIADKVIKIVESNQ</sequence>
<organism>
    <name type="scientific">Saccharolobus solfataricus (strain ATCC 35092 / DSM 1617 / JCM 11322 / P2)</name>
    <name type="common">Sulfolobus solfataricus</name>
    <dbReference type="NCBI Taxonomy" id="273057"/>
    <lineage>
        <taxon>Archaea</taxon>
        <taxon>Thermoproteota</taxon>
        <taxon>Thermoprotei</taxon>
        <taxon>Sulfolobales</taxon>
        <taxon>Sulfolobaceae</taxon>
        <taxon>Saccharolobus</taxon>
    </lineage>
</organism>
<reference key="1">
    <citation type="journal article" date="2001" name="Proc. Natl. Acad. Sci. U.S.A.">
        <title>The complete genome of the crenarchaeon Sulfolobus solfataricus P2.</title>
        <authorList>
            <person name="She Q."/>
            <person name="Singh R.K."/>
            <person name="Confalonieri F."/>
            <person name="Zivanovic Y."/>
            <person name="Allard G."/>
            <person name="Awayez M.J."/>
            <person name="Chan-Weiher C.C.-Y."/>
            <person name="Clausen I.G."/>
            <person name="Curtis B.A."/>
            <person name="De Moors A."/>
            <person name="Erauso G."/>
            <person name="Fletcher C."/>
            <person name="Gordon P.M.K."/>
            <person name="Heikamp-de Jong I."/>
            <person name="Jeffries A.C."/>
            <person name="Kozera C.J."/>
            <person name="Medina N."/>
            <person name="Peng X."/>
            <person name="Thi-Ngoc H.P."/>
            <person name="Redder P."/>
            <person name="Schenk M.E."/>
            <person name="Theriault C."/>
            <person name="Tolstrup N."/>
            <person name="Charlebois R.L."/>
            <person name="Doolittle W.F."/>
            <person name="Duguet M."/>
            <person name="Gaasterland T."/>
            <person name="Garrett R.A."/>
            <person name="Ragan M.A."/>
            <person name="Sensen C.W."/>
            <person name="Van der Oost J."/>
        </authorList>
    </citation>
    <scope>NUCLEOTIDE SEQUENCE [LARGE SCALE GENOMIC DNA]</scope>
    <source>
        <strain>ATCC 35092 / DSM 1617 / JCM 11322 / P2</strain>
    </source>
</reference>
<reference key="2">
    <citation type="journal article" date="2009" name="J. Bacteriol.">
        <title>Archaeal ApbC/Nbp35 homologs function as iron-sulfur cluster carrier proteins.</title>
        <authorList>
            <person name="Boyd J.M."/>
            <person name="Drevland R.M."/>
            <person name="Downs D.M."/>
            <person name="Graham D.E."/>
        </authorList>
    </citation>
    <scope>FUNCTION</scope>
    <source>
        <strain>ATCC 35092 / DSM 1617 / JCM 11322 / P2</strain>
    </source>
</reference>
<keyword id="KW-0067">ATP-binding</keyword>
<keyword id="KW-0378">Hydrolase</keyword>
<keyword id="KW-0408">Iron</keyword>
<keyword id="KW-0411">Iron-sulfur</keyword>
<keyword id="KW-0479">Metal-binding</keyword>
<keyword id="KW-0547">Nucleotide-binding</keyword>
<keyword id="KW-1185">Reference proteome</keyword>
<protein>
    <recommendedName>
        <fullName evidence="1 4">Iron-sulfur cluster carrier protein</fullName>
    </recommendedName>
</protein>
<comment type="function">
    <text evidence="1 3">Binds and transfers iron-sulfur (Fe-S) clusters to target apoproteins. Can hydrolyze ATP.</text>
</comment>
<comment type="subunit">
    <text evidence="1">Homodimer.</text>
</comment>
<comment type="miscellaneous">
    <text evidence="3">Although the second Cys residue of the CXXC motif is replaced with Asp, the protein has Fe-S carrier activity, suggesting that individual cysteine residues in the CXXC motif are dispensable for Fe-S cluster binding.</text>
</comment>
<comment type="similarity">
    <text evidence="1">Belongs to the Mrp/NBP35 ATP-binding proteins family.</text>
</comment>
<feature type="chain" id="PRO_0000433954" description="Iron-sulfur cluster carrier protein">
    <location>
        <begin position="1"/>
        <end position="296"/>
    </location>
</feature>
<feature type="region of interest" description="Disordered" evidence="2">
    <location>
        <begin position="1"/>
        <end position="23"/>
    </location>
</feature>
<feature type="compositionally biased region" description="Low complexity" evidence="2">
    <location>
        <begin position="1"/>
        <end position="17"/>
    </location>
</feature>
<feature type="binding site" evidence="1">
    <location>
        <begin position="52"/>
        <end position="59"/>
    </location>
    <ligand>
        <name>ATP</name>
        <dbReference type="ChEBI" id="CHEBI:30616"/>
    </ligand>
</feature>
<dbReference type="EMBL" id="AE006641">
    <property type="protein sequence ID" value="AAK40784.1"/>
    <property type="molecule type" value="Genomic_DNA"/>
</dbReference>
<dbReference type="PIR" id="A90191">
    <property type="entry name" value="A90191"/>
</dbReference>
<dbReference type="RefSeq" id="WP_010922978.1">
    <property type="nucleotide sequence ID" value="NC_002754.1"/>
</dbReference>
<dbReference type="SMR" id="Q97ZW4"/>
<dbReference type="FunCoup" id="Q97ZW4">
    <property type="interactions" value="133"/>
</dbReference>
<dbReference type="STRING" id="273057.SSO0460"/>
<dbReference type="PaxDb" id="273057-SSO0460"/>
<dbReference type="EnsemblBacteria" id="AAK40784">
    <property type="protein sequence ID" value="AAK40784"/>
    <property type="gene ID" value="SSO0460"/>
</dbReference>
<dbReference type="KEGG" id="sso:SSO0460"/>
<dbReference type="PATRIC" id="fig|273057.12.peg.454"/>
<dbReference type="eggNOG" id="arCOG00585">
    <property type="taxonomic scope" value="Archaea"/>
</dbReference>
<dbReference type="HOGENOM" id="CLU_024839_0_1_2"/>
<dbReference type="InParanoid" id="Q97ZW4"/>
<dbReference type="PhylomeDB" id="Q97ZW4"/>
<dbReference type="Proteomes" id="UP000001974">
    <property type="component" value="Chromosome"/>
</dbReference>
<dbReference type="GO" id="GO:0005829">
    <property type="term" value="C:cytosol"/>
    <property type="evidence" value="ECO:0000318"/>
    <property type="project" value="GO_Central"/>
</dbReference>
<dbReference type="GO" id="GO:0005524">
    <property type="term" value="F:ATP binding"/>
    <property type="evidence" value="ECO:0007669"/>
    <property type="project" value="UniProtKB-UniRule"/>
</dbReference>
<dbReference type="GO" id="GO:0016887">
    <property type="term" value="F:ATP hydrolysis activity"/>
    <property type="evidence" value="ECO:0007669"/>
    <property type="project" value="UniProtKB-UniRule"/>
</dbReference>
<dbReference type="GO" id="GO:0140663">
    <property type="term" value="F:ATP-dependent FeS chaperone activity"/>
    <property type="evidence" value="ECO:0007669"/>
    <property type="project" value="InterPro"/>
</dbReference>
<dbReference type="GO" id="GO:0051536">
    <property type="term" value="F:iron-sulfur cluster binding"/>
    <property type="evidence" value="ECO:0000318"/>
    <property type="project" value="GO_Central"/>
</dbReference>
<dbReference type="GO" id="GO:0046872">
    <property type="term" value="F:metal ion binding"/>
    <property type="evidence" value="ECO:0007669"/>
    <property type="project" value="UniProtKB-KW"/>
</dbReference>
<dbReference type="GO" id="GO:0016226">
    <property type="term" value="P:iron-sulfur cluster assembly"/>
    <property type="evidence" value="ECO:0000318"/>
    <property type="project" value="GO_Central"/>
</dbReference>
<dbReference type="CDD" id="cd02037">
    <property type="entry name" value="Mrp_NBP35"/>
    <property type="match status" value="1"/>
</dbReference>
<dbReference type="FunFam" id="3.40.50.300:FF:001119">
    <property type="entry name" value="Iron-sulfur cluster carrier protein"/>
    <property type="match status" value="1"/>
</dbReference>
<dbReference type="Gene3D" id="3.40.50.300">
    <property type="entry name" value="P-loop containing nucleotide triphosphate hydrolases"/>
    <property type="match status" value="1"/>
</dbReference>
<dbReference type="HAMAP" id="MF_02040">
    <property type="entry name" value="Mrp_NBP35"/>
    <property type="match status" value="1"/>
</dbReference>
<dbReference type="InterPro" id="IPR000808">
    <property type="entry name" value="Mrp-like_CS"/>
</dbReference>
<dbReference type="InterPro" id="IPR019591">
    <property type="entry name" value="Mrp/NBP35_ATP-bd"/>
</dbReference>
<dbReference type="InterPro" id="IPR027417">
    <property type="entry name" value="P-loop_NTPase"/>
</dbReference>
<dbReference type="InterPro" id="IPR033756">
    <property type="entry name" value="YlxH/NBP35"/>
</dbReference>
<dbReference type="PANTHER" id="PTHR23264:SF19">
    <property type="entry name" value="CYTOSOLIC FE-S CLUSTER ASSEMBLY FACTOR NUBP2"/>
    <property type="match status" value="1"/>
</dbReference>
<dbReference type="PANTHER" id="PTHR23264">
    <property type="entry name" value="NUCLEOTIDE-BINDING PROTEIN NBP35 YEAST -RELATED"/>
    <property type="match status" value="1"/>
</dbReference>
<dbReference type="Pfam" id="PF10609">
    <property type="entry name" value="ParA"/>
    <property type="match status" value="1"/>
</dbReference>
<dbReference type="SUPFAM" id="SSF52540">
    <property type="entry name" value="P-loop containing nucleoside triphosphate hydrolases"/>
    <property type="match status" value="1"/>
</dbReference>
<dbReference type="PROSITE" id="PS01215">
    <property type="entry name" value="MRP"/>
    <property type="match status" value="1"/>
</dbReference>
<evidence type="ECO:0000255" key="1">
    <source>
        <dbReference type="HAMAP-Rule" id="MF_02040"/>
    </source>
</evidence>
<evidence type="ECO:0000256" key="2">
    <source>
        <dbReference type="SAM" id="MobiDB-lite"/>
    </source>
</evidence>
<evidence type="ECO:0000269" key="3">
    <source>
    </source>
</evidence>
<evidence type="ECO:0000303" key="4">
    <source>
    </source>
</evidence>
<evidence type="ECO:0000312" key="5">
    <source>
        <dbReference type="EMBL" id="AAK40784.1"/>
    </source>
</evidence>